<sequence length="188" mass="21006">MEDERSLSDICGGRLALHRRYYSPSCLEFCLSCPRISLRSITAVTCTVWLAAYGLFTLCENSMILSAAIFITLLGLLGYLHFVKIDHETLLIIDSLGIQMTSSYASGKESTTFIEMGKVKDVIINEAIYMQKVIYYLCILLKDPVEPHGISQVVPIFQSAKPRLDCLIEVYRSCQEILAHQKAASTSP</sequence>
<comment type="function">
    <text evidence="2">Part of the glycosylphosphatidylinositol-N-acetylglucosaminyltransferase (GPI-GnT) complex that catalyzes the transfer of N-acetylglucosamine from UDP-N-acetylglucosamine to phosphatidylinositol and participates in the first step of GPI biosynthesis.</text>
</comment>
<comment type="pathway">
    <text evidence="2">Glycolipid biosynthesis; glycosylphosphatidylinositol-anchor biosynthesis.</text>
</comment>
<comment type="subunit">
    <text evidence="2">Component of the glycosylphosphatidylinositol-N-acetylglucosaminyltransferase (GPI-GnT) complex composed at least by PIGA, PIGC, PIGH, PIGP, PIGQ, PIGY and DPM2. Interacts with PIGQ.</text>
</comment>
<comment type="subcellular location">
    <subcellularLocation>
        <location evidence="1">Cytoplasm</location>
    </subcellularLocation>
</comment>
<comment type="similarity">
    <text evidence="3">Belongs to the PIGH family.</text>
</comment>
<reference key="1">
    <citation type="submission" date="2005-11" db="EMBL/GenBank/DDBJ databases">
        <authorList>
            <consortium name="NIH - Mammalian Gene Collection (MGC) project"/>
        </authorList>
    </citation>
    <scope>NUCLEOTIDE SEQUENCE [LARGE SCALE MRNA]</scope>
    <source>
        <strain>Crossbred X Angus</strain>
        <tissue>Liver</tissue>
    </source>
</reference>
<protein>
    <recommendedName>
        <fullName evidence="2">Phosphatidylinositol N-acetylglucosaminyltransferase subunit H</fullName>
    </recommendedName>
    <alternativeName>
        <fullName>Phosphatidylinositol-glycan biosynthesis class H protein</fullName>
        <shortName>PIG-H</shortName>
    </alternativeName>
</protein>
<gene>
    <name evidence="2" type="primary">PIGH</name>
</gene>
<name>PIGH_BOVIN</name>
<dbReference type="EMBL" id="BC109701">
    <property type="protein sequence ID" value="AAI09702.1"/>
    <property type="molecule type" value="mRNA"/>
</dbReference>
<dbReference type="RefSeq" id="NP_001033205.2">
    <property type="nucleotide sequence ID" value="NM_001038116.2"/>
</dbReference>
<dbReference type="FunCoup" id="Q32L89">
    <property type="interactions" value="1335"/>
</dbReference>
<dbReference type="STRING" id="9913.ENSBTAP00000024352"/>
<dbReference type="PaxDb" id="9913-ENSBTAP00000024352"/>
<dbReference type="GeneID" id="515306"/>
<dbReference type="KEGG" id="bta:515306"/>
<dbReference type="CTD" id="5283"/>
<dbReference type="eggNOG" id="KOG4551">
    <property type="taxonomic scope" value="Eukaryota"/>
</dbReference>
<dbReference type="InParanoid" id="Q32L89"/>
<dbReference type="OrthoDB" id="6256716at2759"/>
<dbReference type="UniPathway" id="UPA00196"/>
<dbReference type="Proteomes" id="UP000009136">
    <property type="component" value="Unplaced"/>
</dbReference>
<dbReference type="GO" id="GO:0000506">
    <property type="term" value="C:glycosylphosphatidylinositol-N-acetylglucosaminyltransferase (GPI-GnT) complex"/>
    <property type="evidence" value="ECO:0000250"/>
    <property type="project" value="UniProtKB"/>
</dbReference>
<dbReference type="GO" id="GO:0006506">
    <property type="term" value="P:GPI anchor biosynthetic process"/>
    <property type="evidence" value="ECO:0000250"/>
    <property type="project" value="UniProtKB"/>
</dbReference>
<dbReference type="InterPro" id="IPR019328">
    <property type="entry name" value="GPI-GlcNAc_Trfase_PIG-H_dom"/>
</dbReference>
<dbReference type="InterPro" id="IPR044215">
    <property type="entry name" value="PIG-H"/>
</dbReference>
<dbReference type="PANTHER" id="PTHR15231">
    <property type="entry name" value="PHOSPHATIDYLINOSITOL N-ACETYLGLUCOSAMINYLTRANSFERASE SUBUNIT H"/>
    <property type="match status" value="1"/>
</dbReference>
<dbReference type="PANTHER" id="PTHR15231:SF1">
    <property type="entry name" value="PHOSPHATIDYLINOSITOL N-ACETYLGLUCOSAMINYLTRANSFERASE SUBUNIT H"/>
    <property type="match status" value="1"/>
</dbReference>
<dbReference type="Pfam" id="PF10181">
    <property type="entry name" value="PIG-H"/>
    <property type="match status" value="1"/>
</dbReference>
<organism>
    <name type="scientific">Bos taurus</name>
    <name type="common">Bovine</name>
    <dbReference type="NCBI Taxonomy" id="9913"/>
    <lineage>
        <taxon>Eukaryota</taxon>
        <taxon>Metazoa</taxon>
        <taxon>Chordata</taxon>
        <taxon>Craniata</taxon>
        <taxon>Vertebrata</taxon>
        <taxon>Euteleostomi</taxon>
        <taxon>Mammalia</taxon>
        <taxon>Eutheria</taxon>
        <taxon>Laurasiatheria</taxon>
        <taxon>Artiodactyla</taxon>
        <taxon>Ruminantia</taxon>
        <taxon>Pecora</taxon>
        <taxon>Bovidae</taxon>
        <taxon>Bovinae</taxon>
        <taxon>Bos</taxon>
    </lineage>
</organism>
<evidence type="ECO:0000250" key="1"/>
<evidence type="ECO:0000250" key="2">
    <source>
        <dbReference type="UniProtKB" id="Q14442"/>
    </source>
</evidence>
<evidence type="ECO:0000305" key="3"/>
<feature type="chain" id="PRO_0000281861" description="Phosphatidylinositol N-acetylglucosaminyltransferase subunit H">
    <location>
        <begin position="1"/>
        <end position="188"/>
    </location>
</feature>
<proteinExistence type="evidence at transcript level"/>
<accession>Q32L89</accession>
<keyword id="KW-0963">Cytoplasm</keyword>
<keyword id="KW-1185">Reference proteome</keyword>